<proteinExistence type="evidence at protein level"/>
<dbReference type="EMBL" id="AF349658">
    <property type="protein sequence ID" value="AAK14407.1"/>
    <property type="molecule type" value="mRNA"/>
</dbReference>
<dbReference type="EMBL" id="AF326960">
    <property type="protein sequence ID" value="AAG61088.1"/>
    <property type="molecule type" value="mRNA"/>
</dbReference>
<dbReference type="EMBL" id="U57327">
    <property type="protein sequence ID" value="AAC53106.1"/>
    <property type="molecule type" value="mRNA"/>
</dbReference>
<dbReference type="EMBL" id="U15565">
    <property type="protein sequence ID" value="AAC52696.1"/>
    <property type="molecule type" value="mRNA"/>
</dbReference>
<dbReference type="CCDS" id="CCDS28023.1">
    <molecule id="P70323-2"/>
</dbReference>
<dbReference type="CCDS" id="CCDS88897.1">
    <molecule id="P70323-1"/>
</dbReference>
<dbReference type="RefSeq" id="NP_035662.1">
    <property type="nucleotide sequence ID" value="NM_011532.2"/>
</dbReference>
<dbReference type="SMR" id="P70323"/>
<dbReference type="BioGRID" id="203984">
    <property type="interactions" value="5"/>
</dbReference>
<dbReference type="FunCoup" id="P70323">
    <property type="interactions" value="1063"/>
</dbReference>
<dbReference type="IntAct" id="P70323">
    <property type="interactions" value="3"/>
</dbReference>
<dbReference type="STRING" id="10090.ENSMUSP00000156061"/>
<dbReference type="GlyGen" id="P70323">
    <property type="glycosylation" value="1 site"/>
</dbReference>
<dbReference type="iPTMnet" id="P70323"/>
<dbReference type="PhosphoSitePlus" id="P70323"/>
<dbReference type="PaxDb" id="10090-ENSMUSP00000009241"/>
<dbReference type="ProteomicsDB" id="263014">
    <molecule id="P70323-1"/>
</dbReference>
<dbReference type="ProteomicsDB" id="263015">
    <molecule id="P70323-2"/>
</dbReference>
<dbReference type="DNASU" id="21380"/>
<dbReference type="GeneID" id="21380"/>
<dbReference type="KEGG" id="mmu:21380"/>
<dbReference type="AGR" id="MGI:98493"/>
<dbReference type="CTD" id="6899"/>
<dbReference type="MGI" id="MGI:98493">
    <property type="gene designation" value="Tbx1"/>
</dbReference>
<dbReference type="eggNOG" id="KOG3586">
    <property type="taxonomic scope" value="Eukaryota"/>
</dbReference>
<dbReference type="InParanoid" id="P70323"/>
<dbReference type="OrthoDB" id="7442607at2759"/>
<dbReference type="PhylomeDB" id="P70323"/>
<dbReference type="BioGRID-ORCS" id="21380">
    <property type="hits" value="2 hits in 80 CRISPR screens"/>
</dbReference>
<dbReference type="ChiTaRS" id="Litaf">
    <property type="organism name" value="mouse"/>
</dbReference>
<dbReference type="PRO" id="PR:P70323"/>
<dbReference type="Proteomes" id="UP000000589">
    <property type="component" value="Unplaced"/>
</dbReference>
<dbReference type="RNAct" id="P70323">
    <property type="molecule type" value="protein"/>
</dbReference>
<dbReference type="GO" id="GO:0005634">
    <property type="term" value="C:nucleus"/>
    <property type="evidence" value="ECO:0000314"/>
    <property type="project" value="UniProtKB"/>
</dbReference>
<dbReference type="GO" id="GO:0001228">
    <property type="term" value="F:DNA-binding transcription activator activity, RNA polymerase II-specific"/>
    <property type="evidence" value="ECO:0000314"/>
    <property type="project" value="NTNU_SB"/>
</dbReference>
<dbReference type="GO" id="GO:0042803">
    <property type="term" value="F:protein homodimerization activity"/>
    <property type="evidence" value="ECO:0000250"/>
    <property type="project" value="UniProtKB"/>
</dbReference>
<dbReference type="GO" id="GO:0000978">
    <property type="term" value="F:RNA polymerase II cis-regulatory region sequence-specific DNA binding"/>
    <property type="evidence" value="ECO:0007669"/>
    <property type="project" value="InterPro"/>
</dbReference>
<dbReference type="GO" id="GO:0001162">
    <property type="term" value="F:RNA polymerase II intronic transcription regulatory region sequence-specific DNA binding"/>
    <property type="evidence" value="ECO:0000314"/>
    <property type="project" value="NTNU_SB"/>
</dbReference>
<dbReference type="GO" id="GO:0043565">
    <property type="term" value="F:sequence-specific DNA binding"/>
    <property type="evidence" value="ECO:0000250"/>
    <property type="project" value="UniProtKB"/>
</dbReference>
<dbReference type="GO" id="GO:0036305">
    <property type="term" value="P:ameloblast differentiation"/>
    <property type="evidence" value="ECO:0000315"/>
    <property type="project" value="MGI"/>
</dbReference>
<dbReference type="GO" id="GO:0001525">
    <property type="term" value="P:angiogenesis"/>
    <property type="evidence" value="ECO:0000315"/>
    <property type="project" value="MGI"/>
</dbReference>
<dbReference type="GO" id="GO:0009952">
    <property type="term" value="P:anterior/posterior pattern specification"/>
    <property type="evidence" value="ECO:0000315"/>
    <property type="project" value="MGI"/>
</dbReference>
<dbReference type="GO" id="GO:0035909">
    <property type="term" value="P:aorta morphogenesis"/>
    <property type="evidence" value="ECO:0000315"/>
    <property type="project" value="MGI"/>
</dbReference>
<dbReference type="GO" id="GO:0048844">
    <property type="term" value="P:artery morphogenesis"/>
    <property type="evidence" value="ECO:0000315"/>
    <property type="project" value="MGI"/>
</dbReference>
<dbReference type="GO" id="GO:0001568">
    <property type="term" value="P:blood vessel development"/>
    <property type="evidence" value="ECO:0000315"/>
    <property type="project" value="MGI"/>
</dbReference>
<dbReference type="GO" id="GO:0048514">
    <property type="term" value="P:blood vessel morphogenesis"/>
    <property type="evidence" value="ECO:0000315"/>
    <property type="project" value="MGI"/>
</dbReference>
<dbReference type="GO" id="GO:0001974">
    <property type="term" value="P:blood vessel remodeling"/>
    <property type="evidence" value="ECO:0000316"/>
    <property type="project" value="MGI"/>
</dbReference>
<dbReference type="GO" id="GO:0001569">
    <property type="term" value="P:branching involved in blood vessel morphogenesis"/>
    <property type="evidence" value="ECO:0000304"/>
    <property type="project" value="DFLAT"/>
</dbReference>
<dbReference type="GO" id="GO:0008283">
    <property type="term" value="P:cell population proliferation"/>
    <property type="evidence" value="ECO:0000315"/>
    <property type="project" value="MGI"/>
</dbReference>
<dbReference type="GO" id="GO:0044344">
    <property type="term" value="P:cellular response to fibroblast growth factor stimulus"/>
    <property type="evidence" value="ECO:0000315"/>
    <property type="project" value="UniProtKB"/>
</dbReference>
<dbReference type="GO" id="GO:0071300">
    <property type="term" value="P:cellular response to retinoic acid"/>
    <property type="evidence" value="ECO:0000270"/>
    <property type="project" value="UniProtKB"/>
</dbReference>
<dbReference type="GO" id="GO:0090103">
    <property type="term" value="P:cochlea morphogenesis"/>
    <property type="evidence" value="ECO:0000315"/>
    <property type="project" value="MGI"/>
</dbReference>
<dbReference type="GO" id="GO:0060982">
    <property type="term" value="P:coronary artery morphogenesis"/>
    <property type="evidence" value="ECO:0000315"/>
    <property type="project" value="MGI"/>
</dbReference>
<dbReference type="GO" id="GO:1904888">
    <property type="term" value="P:cranial skeletal system development"/>
    <property type="evidence" value="ECO:0000316"/>
    <property type="project" value="MGI"/>
</dbReference>
<dbReference type="GO" id="GO:0007368">
    <property type="term" value="P:determination of left/right symmetry"/>
    <property type="evidence" value="ECO:0000315"/>
    <property type="project" value="MGI"/>
</dbReference>
<dbReference type="GO" id="GO:0042471">
    <property type="term" value="P:ear morphogenesis"/>
    <property type="evidence" value="ECO:0000315"/>
    <property type="project" value="MGI"/>
</dbReference>
<dbReference type="GO" id="GO:0048701">
    <property type="term" value="P:embryonic cranial skeleton morphogenesis"/>
    <property type="evidence" value="ECO:0000315"/>
    <property type="project" value="MGI"/>
</dbReference>
<dbReference type="GO" id="GO:0048703">
    <property type="term" value="P:embryonic viscerocranium morphogenesis"/>
    <property type="evidence" value="ECO:0000250"/>
    <property type="project" value="UniProtKB"/>
</dbReference>
<dbReference type="GO" id="GO:0070166">
    <property type="term" value="P:enamel mineralization"/>
    <property type="evidence" value="ECO:0000315"/>
    <property type="project" value="MGI"/>
</dbReference>
<dbReference type="GO" id="GO:0050673">
    <property type="term" value="P:epithelial cell proliferation"/>
    <property type="evidence" value="ECO:0000315"/>
    <property type="project" value="MGI"/>
</dbReference>
<dbReference type="GO" id="GO:0060325">
    <property type="term" value="P:face morphogenesis"/>
    <property type="evidence" value="ECO:0000315"/>
    <property type="project" value="MGI"/>
</dbReference>
<dbReference type="GO" id="GO:0060022">
    <property type="term" value="P:hard palate development"/>
    <property type="evidence" value="ECO:0000315"/>
    <property type="project" value="MGI"/>
</dbReference>
<dbReference type="GO" id="GO:0007507">
    <property type="term" value="P:heart development"/>
    <property type="evidence" value="ECO:0000315"/>
    <property type="project" value="UniProtKB"/>
</dbReference>
<dbReference type="GO" id="GO:0003007">
    <property type="term" value="P:heart morphogenesis"/>
    <property type="evidence" value="ECO:0000315"/>
    <property type="project" value="MGI"/>
</dbReference>
<dbReference type="GO" id="GO:0042472">
    <property type="term" value="P:inner ear morphogenesis"/>
    <property type="evidence" value="ECO:0000315"/>
    <property type="project" value="MGI"/>
</dbReference>
<dbReference type="GO" id="GO:0001945">
    <property type="term" value="P:lymph vessel development"/>
    <property type="evidence" value="ECO:0000315"/>
    <property type="project" value="MGI"/>
</dbReference>
<dbReference type="GO" id="GO:0097152">
    <property type="term" value="P:mesenchymal cell apoptotic process"/>
    <property type="evidence" value="ECO:0000315"/>
    <property type="project" value="UniProtKB"/>
</dbReference>
<dbReference type="GO" id="GO:0010463">
    <property type="term" value="P:mesenchymal cell proliferation"/>
    <property type="evidence" value="ECO:0000314"/>
    <property type="project" value="MGI"/>
</dbReference>
<dbReference type="GO" id="GO:0007498">
    <property type="term" value="P:mesoderm development"/>
    <property type="evidence" value="ECO:0000315"/>
    <property type="project" value="MGI"/>
</dbReference>
<dbReference type="GO" id="GO:0042474">
    <property type="term" value="P:middle ear morphogenesis"/>
    <property type="evidence" value="ECO:0000315"/>
    <property type="project" value="MGI"/>
</dbReference>
<dbReference type="GO" id="GO:0042693">
    <property type="term" value="P:muscle cell fate commitment"/>
    <property type="evidence" value="ECO:0000315"/>
    <property type="project" value="MGI"/>
</dbReference>
<dbReference type="GO" id="GO:0007517">
    <property type="term" value="P:muscle organ development"/>
    <property type="evidence" value="ECO:0000315"/>
    <property type="project" value="MGI"/>
</dbReference>
<dbReference type="GO" id="GO:0048644">
    <property type="term" value="P:muscle organ morphogenesis"/>
    <property type="evidence" value="ECO:0000316"/>
    <property type="project" value="MGI"/>
</dbReference>
<dbReference type="GO" id="GO:0060415">
    <property type="term" value="P:muscle tissue morphogenesis"/>
    <property type="evidence" value="ECO:0000315"/>
    <property type="project" value="MGI"/>
</dbReference>
<dbReference type="GO" id="GO:0045596">
    <property type="term" value="P:negative regulation of cell differentiation"/>
    <property type="evidence" value="ECO:0000315"/>
    <property type="project" value="MGI"/>
</dbReference>
<dbReference type="GO" id="GO:2001054">
    <property type="term" value="P:negative regulation of mesenchymal cell apoptotic process"/>
    <property type="evidence" value="ECO:0000316"/>
    <property type="project" value="UniProtKB"/>
</dbReference>
<dbReference type="GO" id="GO:0000122">
    <property type="term" value="P:negative regulation of transcription by RNA polymerase II"/>
    <property type="evidence" value="ECO:0000315"/>
    <property type="project" value="BHF-UCL"/>
</dbReference>
<dbReference type="GO" id="GO:0001755">
    <property type="term" value="P:neural crest cell migration"/>
    <property type="evidence" value="ECO:0000315"/>
    <property type="project" value="MGI"/>
</dbReference>
<dbReference type="GO" id="GO:0048665">
    <property type="term" value="P:neuron fate specification"/>
    <property type="evidence" value="ECO:0000315"/>
    <property type="project" value="MGI"/>
</dbReference>
<dbReference type="GO" id="GO:0042475">
    <property type="term" value="P:odontogenesis of dentin-containing tooth"/>
    <property type="evidence" value="ECO:0000315"/>
    <property type="project" value="MGI"/>
</dbReference>
<dbReference type="GO" id="GO:0071600">
    <property type="term" value="P:otic vesicle morphogenesis"/>
    <property type="evidence" value="ECO:0000315"/>
    <property type="project" value="MGI"/>
</dbReference>
<dbReference type="GO" id="GO:0042473">
    <property type="term" value="P:outer ear morphogenesis"/>
    <property type="evidence" value="ECO:0000315"/>
    <property type="project" value="MGI"/>
</dbReference>
<dbReference type="GO" id="GO:0003151">
    <property type="term" value="P:outflow tract morphogenesis"/>
    <property type="evidence" value="ECO:0000315"/>
    <property type="project" value="MGI"/>
</dbReference>
<dbReference type="GO" id="GO:0003148">
    <property type="term" value="P:outflow tract septum morphogenesis"/>
    <property type="evidence" value="ECO:0000315"/>
    <property type="project" value="UniProtKB"/>
</dbReference>
<dbReference type="GO" id="GO:0060017">
    <property type="term" value="P:parathyroid gland development"/>
    <property type="evidence" value="ECO:0000315"/>
    <property type="project" value="UniProtKB"/>
</dbReference>
<dbReference type="GO" id="GO:0007389">
    <property type="term" value="P:pattern specification process"/>
    <property type="evidence" value="ECO:0000315"/>
    <property type="project" value="MGI"/>
</dbReference>
<dbReference type="GO" id="GO:0060037">
    <property type="term" value="P:pharyngeal system development"/>
    <property type="evidence" value="ECO:0000315"/>
    <property type="project" value="UniProtKB"/>
</dbReference>
<dbReference type="GO" id="GO:0008284">
    <property type="term" value="P:positive regulation of cell population proliferation"/>
    <property type="evidence" value="ECO:0000315"/>
    <property type="project" value="MGI"/>
</dbReference>
<dbReference type="GO" id="GO:0045893">
    <property type="term" value="P:positive regulation of DNA-templated transcription"/>
    <property type="evidence" value="ECO:0000314"/>
    <property type="project" value="MGI"/>
</dbReference>
<dbReference type="GO" id="GO:0050679">
    <property type="term" value="P:positive regulation of epithelial cell proliferation"/>
    <property type="evidence" value="ECO:0000315"/>
    <property type="project" value="UniProtKB"/>
</dbReference>
<dbReference type="GO" id="GO:0043410">
    <property type="term" value="P:positive regulation of MAPK cascade"/>
    <property type="evidence" value="ECO:0000315"/>
    <property type="project" value="UniProtKB"/>
</dbReference>
<dbReference type="GO" id="GO:0002053">
    <property type="term" value="P:positive regulation of mesenchymal cell proliferation"/>
    <property type="evidence" value="ECO:0000315"/>
    <property type="project" value="UniProtKB"/>
</dbReference>
<dbReference type="GO" id="GO:0001934">
    <property type="term" value="P:positive regulation of protein phosphorylation"/>
    <property type="evidence" value="ECO:0000315"/>
    <property type="project" value="UniProtKB"/>
</dbReference>
<dbReference type="GO" id="GO:0072513">
    <property type="term" value="P:positive regulation of secondary heart field cardioblast proliferation"/>
    <property type="evidence" value="ECO:0000314"/>
    <property type="project" value="MGI"/>
</dbReference>
<dbReference type="GO" id="GO:2001037">
    <property type="term" value="P:positive regulation of tongue muscle cell differentiation"/>
    <property type="evidence" value="ECO:0000315"/>
    <property type="project" value="UniProtKB"/>
</dbReference>
<dbReference type="GO" id="GO:0045944">
    <property type="term" value="P:positive regulation of transcription by RNA polymerase II"/>
    <property type="evidence" value="ECO:0000314"/>
    <property type="project" value="UniProtKB"/>
</dbReference>
<dbReference type="GO" id="GO:2000027">
    <property type="term" value="P:regulation of animal organ morphogenesis"/>
    <property type="evidence" value="ECO:0000315"/>
    <property type="project" value="MGI"/>
</dbReference>
<dbReference type="GO" id="GO:0006357">
    <property type="term" value="P:regulation of transcription by RNA polymerase II"/>
    <property type="evidence" value="ECO:0000316"/>
    <property type="project" value="MGI"/>
</dbReference>
<dbReference type="GO" id="GO:0048384">
    <property type="term" value="P:retinoic acid receptor signaling pathway"/>
    <property type="evidence" value="ECO:0000315"/>
    <property type="project" value="UniProtKB"/>
</dbReference>
<dbReference type="GO" id="GO:0048752">
    <property type="term" value="P:semicircular canal morphogenesis"/>
    <property type="evidence" value="ECO:0000316"/>
    <property type="project" value="MGI"/>
</dbReference>
<dbReference type="GO" id="GO:0007605">
    <property type="term" value="P:sensory perception of sound"/>
    <property type="evidence" value="ECO:0000315"/>
    <property type="project" value="MGI"/>
</dbReference>
<dbReference type="GO" id="GO:0035176">
    <property type="term" value="P:social behavior"/>
    <property type="evidence" value="ECO:0000315"/>
    <property type="project" value="MGI"/>
</dbReference>
<dbReference type="GO" id="GO:0060023">
    <property type="term" value="P:soft palate development"/>
    <property type="evidence" value="ECO:0000250"/>
    <property type="project" value="UniProtKB"/>
</dbReference>
<dbReference type="GO" id="GO:0035019">
    <property type="term" value="P:somatic stem cell population maintenance"/>
    <property type="evidence" value="ECO:0000315"/>
    <property type="project" value="UniProtKB"/>
</dbReference>
<dbReference type="GO" id="GO:0048538">
    <property type="term" value="P:thymus development"/>
    <property type="evidence" value="ECO:0000315"/>
    <property type="project" value="UniProtKB"/>
</dbReference>
<dbReference type="GO" id="GO:0030878">
    <property type="term" value="P:thyroid gland development"/>
    <property type="evidence" value="ECO:0000315"/>
    <property type="project" value="MGI"/>
</dbReference>
<dbReference type="GO" id="GO:0043587">
    <property type="term" value="P:tongue morphogenesis"/>
    <property type="evidence" value="ECO:0000315"/>
    <property type="project" value="UniProtKB"/>
</dbReference>
<dbReference type="GO" id="GO:0021644">
    <property type="term" value="P:vagus nerve morphogenesis"/>
    <property type="evidence" value="ECO:0000315"/>
    <property type="project" value="MGI"/>
</dbReference>
<dbReference type="CDD" id="cd20187">
    <property type="entry name" value="T-box_TBX1_10-like"/>
    <property type="match status" value="1"/>
</dbReference>
<dbReference type="FunFam" id="2.60.40.820:FF:000006">
    <property type="entry name" value="T-box transcription factor"/>
    <property type="match status" value="1"/>
</dbReference>
<dbReference type="Gene3D" id="2.60.40.820">
    <property type="entry name" value="Transcription factor, T-box"/>
    <property type="match status" value="1"/>
</dbReference>
<dbReference type="InterPro" id="IPR008967">
    <property type="entry name" value="p53-like_TF_DNA-bd_sf"/>
</dbReference>
<dbReference type="InterPro" id="IPR046360">
    <property type="entry name" value="T-box_DNA-bd"/>
</dbReference>
<dbReference type="InterPro" id="IPR036960">
    <property type="entry name" value="T-box_sf"/>
</dbReference>
<dbReference type="InterPro" id="IPR001699">
    <property type="entry name" value="TF_T-box"/>
</dbReference>
<dbReference type="InterPro" id="IPR018186">
    <property type="entry name" value="TF_T-box_CS"/>
</dbReference>
<dbReference type="PANTHER" id="PTHR11267">
    <property type="entry name" value="T-BOX PROTEIN-RELATED"/>
    <property type="match status" value="1"/>
</dbReference>
<dbReference type="PANTHER" id="PTHR11267:SF104">
    <property type="entry name" value="T-BOX TRANSCRIPTION FACTOR TBX1"/>
    <property type="match status" value="1"/>
</dbReference>
<dbReference type="Pfam" id="PF00907">
    <property type="entry name" value="T-box"/>
    <property type="match status" value="1"/>
</dbReference>
<dbReference type="PRINTS" id="PR00937">
    <property type="entry name" value="TBOX"/>
</dbReference>
<dbReference type="SMART" id="SM00425">
    <property type="entry name" value="TBOX"/>
    <property type="match status" value="1"/>
</dbReference>
<dbReference type="SUPFAM" id="SSF49417">
    <property type="entry name" value="p53-like transcription factors"/>
    <property type="match status" value="1"/>
</dbReference>
<dbReference type="PROSITE" id="PS01283">
    <property type="entry name" value="TBOX_1"/>
    <property type="match status" value="1"/>
</dbReference>
<dbReference type="PROSITE" id="PS01264">
    <property type="entry name" value="TBOX_2"/>
    <property type="match status" value="1"/>
</dbReference>
<dbReference type="PROSITE" id="PS50252">
    <property type="entry name" value="TBOX_3"/>
    <property type="match status" value="1"/>
</dbReference>
<organism>
    <name type="scientific">Mus musculus</name>
    <name type="common">Mouse</name>
    <dbReference type="NCBI Taxonomy" id="10090"/>
    <lineage>
        <taxon>Eukaryota</taxon>
        <taxon>Metazoa</taxon>
        <taxon>Chordata</taxon>
        <taxon>Craniata</taxon>
        <taxon>Vertebrata</taxon>
        <taxon>Euteleostomi</taxon>
        <taxon>Mammalia</taxon>
        <taxon>Eutheria</taxon>
        <taxon>Euarchontoglires</taxon>
        <taxon>Glires</taxon>
        <taxon>Rodentia</taxon>
        <taxon>Myomorpha</taxon>
        <taxon>Muroidea</taxon>
        <taxon>Muridae</taxon>
        <taxon>Murinae</taxon>
        <taxon>Mus</taxon>
        <taxon>Mus</taxon>
    </lineage>
</organism>
<evidence type="ECO:0000250" key="1">
    <source>
        <dbReference type="UniProtKB" id="O43435"/>
    </source>
</evidence>
<evidence type="ECO:0000255" key="2">
    <source>
        <dbReference type="PROSITE-ProRule" id="PRU00201"/>
    </source>
</evidence>
<evidence type="ECO:0000256" key="3">
    <source>
        <dbReference type="SAM" id="MobiDB-lite"/>
    </source>
</evidence>
<evidence type="ECO:0000269" key="4">
    <source>
    </source>
</evidence>
<evidence type="ECO:0000269" key="5">
    <source>
    </source>
</evidence>
<evidence type="ECO:0000269" key="6">
    <source>
    </source>
</evidence>
<evidence type="ECO:0000269" key="7">
    <source>
    </source>
</evidence>
<evidence type="ECO:0000269" key="8">
    <source>
    </source>
</evidence>
<evidence type="ECO:0000269" key="9">
    <source>
    </source>
</evidence>
<evidence type="ECO:0000269" key="10">
    <source>
    </source>
</evidence>
<evidence type="ECO:0000269" key="11">
    <source>
    </source>
</evidence>
<evidence type="ECO:0000269" key="12">
    <source>
    </source>
</evidence>
<evidence type="ECO:0000269" key="13">
    <source>
    </source>
</evidence>
<evidence type="ECO:0000269" key="14">
    <source>
    </source>
</evidence>
<evidence type="ECO:0000303" key="15">
    <source>
    </source>
</evidence>
<evidence type="ECO:0000305" key="16"/>
<evidence type="ECO:0000312" key="17">
    <source>
        <dbReference type="MGI" id="MGI:98493"/>
    </source>
</evidence>
<sequence>MHFSTVTRDMEAFAASSLSGLGSPSPGADPFGPREPPPPRYDPCAAVPGAPGPPPPRAYPFAPAPGAAGSSAAESEGPGASRAAAVKAPVKKNPKVASVSVQLEMKALWDEFNQLGTEMIVTKAGRRMFPTFQVKLFGMDPMADYMLLMDFVPVDDKRYRYAFHSSSWLVAGKADPATPGRVHYHPDSPAKGAQWMKQIVSFDKLKLTNNLLDDNGQIILNSMHRYQPRFHVVYVDPRKDSEKYAEENFKTFVFEETRFTAVTAYQNHRITQLKIASNPFAKGFRDCDPEDWPRNHRPGALPLVSAFARSRNPVASPTQPNGSDKDAAEARREFDRDSGPAALGDATHPPQLLARVLSPALPGPGGLVPLPGGSGGRHSPPHADLRLEAPGASEPLHHHPYKYPAAAYDHYLGAKSRPAPYPLPGLRGHGYHPHAHPHAHPHHHHHPAVNPAAAAAAAAAANVYSSAAAPPGAYDYCPR</sequence>
<feature type="chain" id="PRO_0000184424" description="T-box transcription factor TBX1">
    <location>
        <begin position="1"/>
        <end position="479"/>
    </location>
</feature>
<feature type="DNA-binding region" description="T-box" evidence="2">
    <location>
        <begin position="108"/>
        <end position="286"/>
    </location>
</feature>
<feature type="region of interest" description="Disordered" evidence="3">
    <location>
        <begin position="15"/>
        <end position="86"/>
    </location>
</feature>
<feature type="region of interest" description="Disordered" evidence="3">
    <location>
        <begin position="311"/>
        <end position="398"/>
    </location>
</feature>
<feature type="short sequence motif" description="Nuclear localization signal" evidence="9">
    <location>
        <begin position="415"/>
        <end position="426"/>
    </location>
</feature>
<feature type="compositionally biased region" description="Low complexity" evidence="3">
    <location>
        <begin position="15"/>
        <end position="31"/>
    </location>
</feature>
<feature type="compositionally biased region" description="Low complexity" evidence="3">
    <location>
        <begin position="59"/>
        <end position="86"/>
    </location>
</feature>
<feature type="compositionally biased region" description="Polar residues" evidence="3">
    <location>
        <begin position="313"/>
        <end position="322"/>
    </location>
</feature>
<feature type="compositionally biased region" description="Basic and acidic residues" evidence="3">
    <location>
        <begin position="323"/>
        <end position="338"/>
    </location>
</feature>
<feature type="splice variant" id="VSP_016760" description="In isoform 2." evidence="16">
    <original>MHFSTVTRDME</original>
    <variation>MISAVSSPWLTQLSHFCDVA</variation>
    <location>
        <begin position="1"/>
        <end position="11"/>
    </location>
</feature>
<feature type="mutagenesis site" description="Does not affect transcription factor activity or nuclear localization." evidence="9">
    <original>F</original>
    <variation>Y</variation>
    <location>
        <position position="137"/>
    </location>
</feature>
<feature type="mutagenesis site" description="Does not affect transcription factor activity or nuclear localization." evidence="9">
    <original>G</original>
    <variation>S</variation>
    <location>
        <position position="299"/>
    </location>
</feature>
<feature type="mutagenesis site" description="Abolished nuclear localization." evidence="9">
    <original>RPAPY</original>
    <variation>APAPA</variation>
    <location>
        <begin position="417"/>
        <end position="421"/>
    </location>
</feature>
<feature type="sequence conflict" description="In Ref. 3; AAC53106." evidence="16" ref="3">
    <original>A</original>
    <variation>R</variation>
    <location>
        <position position="174"/>
    </location>
</feature>
<feature type="sequence conflict" description="In Ref. 4; AAC52696." evidence="16" ref="4">
    <original>HY</original>
    <variation>YI</variation>
    <location>
        <begin position="183"/>
        <end position="184"/>
    </location>
</feature>
<feature type="sequence conflict" description="In Ref. 2; AAG61088, 3; AAC53106 and 4; AAC52696." evidence="16" ref="2 3 4">
    <original>Q</original>
    <variation>H</variation>
    <location>
        <position position="217"/>
    </location>
</feature>
<feature type="sequence conflict" description="In Ref. 3; AAC53106 and 4; AAC52696." evidence="16" ref="3 4">
    <original>D</original>
    <variation>A</variation>
    <location>
        <position position="236"/>
    </location>
</feature>
<feature type="sequence conflict" description="In Ref. 3; AAC53106 and 4; AAC52696." evidence="16" ref="3 4">
    <original>A</original>
    <variation>E</variation>
    <location>
        <position position="245"/>
    </location>
</feature>
<name>TBX1_MOUSE</name>
<reference key="1">
    <citation type="journal article" date="2001" name="Dev. Biol.">
        <title>Tbx1, a DiGeorge syndrome candidate gene, is regulated by sonic hedgehog during pharyngeal arch development.</title>
        <authorList>
            <person name="Garg V."/>
            <person name="Yamagishi C."/>
            <person name="Hu T."/>
            <person name="Kathiriya I.S."/>
            <person name="Yamagishi H."/>
            <person name="Srivastava D."/>
        </authorList>
    </citation>
    <scope>NUCLEOTIDE SEQUENCE [MRNA] (ISOFORM 1)</scope>
    <scope>FUNCTION</scope>
    <scope>TISSUE SPECIFICITY</scope>
    <source>
        <strain>Swiss Webster / NIH</strain>
    </source>
</reference>
<reference key="2">
    <citation type="journal article" date="2001" name="Nature">
        <title>Tbx1 haploinsufficiency in the DiGeorge syndrome region causes aortic arch defects in mice.</title>
        <authorList>
            <person name="Lindsay E.A."/>
            <person name="Vitelli F."/>
            <person name="Su H."/>
            <person name="Morishima M."/>
            <person name="Huynh T."/>
            <person name="Pramparo T."/>
            <person name="Jurecic V."/>
            <person name="Ogunrinu G."/>
            <person name="Sutherland H.F."/>
            <person name="Scambler P.J."/>
            <person name="Bradley A."/>
            <person name="Baldini A."/>
        </authorList>
    </citation>
    <scope>NUCLEOTIDE SEQUENCE [MRNA]</scope>
    <scope>FUNCTION</scope>
    <scope>DISRUPTION PHENOTYPE</scope>
</reference>
<reference key="3">
    <citation type="journal article" date="1996" name="Genetics">
        <title>Evolution of mouse T-box genes by tandem duplication and cluster dispersion.</title>
        <authorList>
            <person name="Agulnik S.I."/>
            <person name="Garvey N."/>
            <person name="Hancock S."/>
            <person name="Ruvinsky I."/>
            <person name="Chapman D.L."/>
            <person name="Agulnik I."/>
            <person name="Bollag R.J."/>
            <person name="Papaioannou V.E."/>
            <person name="Silver L.M."/>
        </authorList>
    </citation>
    <scope>NUCLEOTIDE SEQUENCE [MRNA] OF 108-291 (ISOFORMS 1/2)</scope>
    <source>
        <tissue>Embryo</tissue>
    </source>
</reference>
<reference key="4">
    <citation type="journal article" date="1994" name="Nat. Genet.">
        <title>An ancient family of embryonically expressed mouse genes sharing a conserved protein motif with the T locus.</title>
        <authorList>
            <person name="Bollag R.J."/>
            <person name="Siegfried Z."/>
            <person name="Cebra-Thomas J.A."/>
            <person name="Garvey N."/>
            <person name="Davison E.M."/>
            <person name="Silver L.M."/>
        </authorList>
    </citation>
    <scope>NUCLEOTIDE SEQUENCE [MRNA] OF 183-267 (ISOFORMS 1/2)</scope>
    <source>
        <tissue>Embryo</tissue>
    </source>
</reference>
<reference key="5">
    <citation type="journal article" date="1996" name="Dev. Dyn.">
        <title>Expression of the T-box family genes, Tbx1-Tbx5, during early mouse development.</title>
        <authorList>
            <person name="Chapman D.L."/>
            <person name="Garvey N."/>
            <person name="Hancock S."/>
            <person name="Alexiou M."/>
            <person name="Agulnik S.I."/>
            <person name="Gibson-Brown J.J."/>
            <person name="Cebra-Thomas J."/>
            <person name="Bollag R.J."/>
            <person name="Silver L.M."/>
            <person name="Papaioannou V.E."/>
        </authorList>
    </citation>
    <scope>DEVELOPMENTAL STAGE</scope>
</reference>
<reference key="6">
    <citation type="journal article" date="2001" name="Cell">
        <title>TBX1 is responsible for cardiovascular defects in velo-cardio-facial/DiGeorge syndrome.</title>
        <authorList>
            <person name="Merscher S."/>
            <person name="Funke B."/>
            <person name="Epstein J.A."/>
            <person name="Heyer J."/>
            <person name="Puech A."/>
            <person name="Lu M.M."/>
            <person name="Xavier R.J."/>
            <person name="Demay M.B."/>
            <person name="Russell R.G."/>
            <person name="Factor S."/>
            <person name="Tokooya K."/>
            <person name="Jore B.S."/>
            <person name="Lopez M."/>
            <person name="Pandita R.K."/>
            <person name="Lia M."/>
            <person name="Carrion D."/>
            <person name="Xu H."/>
            <person name="Schorle H."/>
            <person name="Kobler J.B."/>
            <person name="Scambler P."/>
            <person name="Wynshaw-Boris A."/>
            <person name="Skoultchi A.I."/>
            <person name="Morrow B.E."/>
            <person name="Kucherlapati R."/>
        </authorList>
    </citation>
    <scope>FUNCTION</scope>
    <scope>DISRUPTION PHENOTYPE</scope>
</reference>
<reference key="7">
    <citation type="journal article" date="2001" name="Nat. Genet.">
        <title>DiGeorge syndrome phenotype in mice mutant for the T-box gene, Tbx1.</title>
        <authorList>
            <person name="Jerome L.A."/>
            <person name="Papaioannou V.E."/>
        </authorList>
    </citation>
    <scope>FUNCTION</scope>
    <scope>DISRUPTION PHENOTYPE</scope>
</reference>
<reference key="8">
    <citation type="journal article" date="2004" name="Hum. Mol. Genet.">
        <title>The del22q11.2 candidate gene Tbx1 regulates branchiomeric myogenesis.</title>
        <authorList>
            <person name="Kelly R.G."/>
            <person name="Jerome-Majewska L.A."/>
            <person name="Papaioannou V.E."/>
        </authorList>
    </citation>
    <scope>FUNCTION</scope>
    <scope>DISRUPTION PHENOTYPE</scope>
</reference>
<reference key="9">
    <citation type="journal article" date="2005" name="Hum. Mol. Genet.">
        <title>Identification of a novel nuclear localization signal in Tbx1 that is deleted in DiGeorge syndrome patients harboring the 1223delC mutation.</title>
        <authorList>
            <person name="Stoller J.Z."/>
            <person name="Epstein J.A."/>
        </authorList>
    </citation>
    <scope>FUNCTION</scope>
    <scope>SUBCELLULAR LOCATION</scope>
    <scope>MUTAGENESIS OF PHE-137; GLY-299 AND 417-ARG--TYR-421</scope>
</reference>
<reference key="10">
    <citation type="journal article" date="2006" name="Development">
        <title>Tbx1 affects asymmetric cardiac morphogenesis by regulating Pitx2 in the secondary heart field.</title>
        <authorList>
            <person name="Nowotschin S."/>
            <person name="Liao J."/>
            <person name="Gage P.J."/>
            <person name="Epstein J.A."/>
            <person name="Campione M."/>
            <person name="Morrow B.E."/>
        </authorList>
    </citation>
    <scope>FUNCTION</scope>
    <scope>INTERACTION WITH NKX2-5</scope>
</reference>
<reference key="11">
    <citation type="journal article" date="2011" name="Development">
        <title>Ripply3, a Tbx1 repressor, is required for development of the pharyngeal apparatus and its derivatives in mice.</title>
        <authorList>
            <person name="Okubo T."/>
            <person name="Kawamura A."/>
            <person name="Takahashi J."/>
            <person name="Yagi H."/>
            <person name="Morishima M."/>
            <person name="Matsuoka R."/>
            <person name="Takada S."/>
        </authorList>
    </citation>
    <scope>INTERACTION WITH DSCR6</scope>
    <scope>DEVELOPMENTAL STAGE</scope>
</reference>
<reference key="12">
    <citation type="journal article" date="2012" name="Nature">
        <title>An RNA interference screen uncovers a new molecule in stem cell self-renewal and long-term regeneration.</title>
        <authorList>
            <person name="Chen T."/>
            <person name="Heller E."/>
            <person name="Beronja S."/>
            <person name="Oshimori N."/>
            <person name="Stokes N."/>
            <person name="Fuchs E."/>
        </authorList>
    </citation>
    <scope>FUNCTION</scope>
    <scope>TISSUE SPECIFICITY</scope>
</reference>
<reference key="13">
    <citation type="journal article" date="2019" name="PLoS Genet.">
        <title>Tbx1 and Foxi3 genetically interact in the pharyngeal pouch endoderm in a mouse model for 22q11.2 deletion syndrome.</title>
        <authorList>
            <person name="Hasten E."/>
            <person name="Morrow B.E."/>
        </authorList>
    </citation>
    <scope>FUNCTION</scope>
</reference>
<protein>
    <recommendedName>
        <fullName>T-box transcription factor TBX1</fullName>
        <shortName>T-box protein 1</shortName>
    </recommendedName>
    <alternativeName>
        <fullName>Testis-specific T-box protein</fullName>
    </alternativeName>
</protein>
<gene>
    <name evidence="15 17" type="primary">Tbx1</name>
</gene>
<comment type="function">
    <text evidence="1 4 5 6 7 8 9 10 12 13">Transcription factor that plays a key role in cardiovascular development by promoting pharyngeal arch segmentation during embryonic development (PubMed:11239417, PubMed:11242049, PubMed:11242110, PubMed:11412027, PubMed:15703190, PubMed:16556915). Also involved in craniofacial muscle development (PubMed:15385444). Together with NKX2-5, acts as a regulator of asymmetric cardiac morphogenesis by promoting expression of PITX2 (PubMed:16556915). Acts upstream of TBX1 for the formation of the thymus and parathyroid glands from the third pharyngeal pouch (PubMed:31412026). Required for hair follicle stem cell self-renewal (PubMed:22495305). Binds to the palindromic T site 5'-TTCACACCTAGGTGTGAA-3' DNA sequence (By similarity).</text>
</comment>
<comment type="subunit">
    <text evidence="1 10 11">Binds DNA as a dimer (By similarity). Interacts with DSCR6 (PubMed:21177346). Interacts with NKX2-5 (PubMed:16556915).</text>
</comment>
<comment type="interaction">
    <interactant intactId="EBI-13635846">
        <id>P70323</id>
    </interactant>
    <interactant intactId="EBI-445929">
        <id>P28359</id>
        <label>Hoxd10</label>
    </interactant>
    <organismsDiffer>false</organismsDiffer>
    <experiments>3</experiments>
</comment>
<comment type="interaction">
    <interactant intactId="EBI-13635846">
        <id>P70323</id>
    </interactant>
    <interactant intactId="EBI-371529">
        <id>Q61466</id>
        <label>Smarcd1</label>
    </interactant>
    <organismsDiffer>false</organismsDiffer>
    <experiments>3</experiments>
</comment>
<comment type="subcellular location">
    <subcellularLocation>
        <location evidence="2 9">Nucleus</location>
    </subcellularLocation>
</comment>
<comment type="alternative products">
    <event type="alternative splicing"/>
    <isoform>
        <id>P70323-1</id>
        <name>1</name>
        <sequence type="displayed"/>
    </isoform>
    <isoform>
        <id>P70323-2</id>
        <name>2</name>
        <sequence type="described" ref="VSP_016760"/>
    </isoform>
</comment>
<comment type="tissue specificity">
    <text evidence="7 12">Expressed in skeletal muscle, lung and testis (PubMed:11412027). Highly expressed in hair follicle stem cell, but not in terminally differentiating cells (PubMed:22495305).</text>
</comment>
<comment type="developmental stage">
    <text evidence="11 14">In the developing embryo, first expressed in the mesoderm at day 7.5. Expressed in the pharyngeal endoderm and the mesodermal cores of the pharyngeal arches at 8.5 dpc. At day 9.5, primarily expressed in the head region, specifically the mesenchyme and epithelium of the pharyngeal region and the otic vesicle epithelium. By day 12.5, expression is still observed in the latter as well as in the tongue mesenchyme, tooth buds and branching lung epithelium.</text>
</comment>
<comment type="disruption phenotype">
    <text evidence="4 5 6 8 12">Mice die at birth with hypoplastic and intermittent missing craniofacial muscles, cleft palate, absent thymus and parathyroid glands, as well as a persistent truncus arteriosus (PTA) with a ventricular septal defect (VSD) (PubMed:11239417, PubMed:11242049, PubMed:11242110, PubMed:15385444). The first arch forms in but the distal pharyngeal arch fails to become segmented, thereby explaining, why the pharyngeal arch derived structures are malformed (PubMed:11239417, PubMed:11242049, PubMed:11242110). Conditional deletion in the skin epithelium leads to delayed tissue regeneration due to progressive depletion of stem cells (PubMed:22495305).</text>
</comment>
<accession>P70323</accession>
<accession>Q60706</accession>
<accession>Q99MP0</accession>
<accession>Q99P22</accession>
<keyword id="KW-0025">Alternative splicing</keyword>
<keyword id="KW-0217">Developmental protein</keyword>
<keyword id="KW-0238">DNA-binding</keyword>
<keyword id="KW-0539">Nucleus</keyword>
<keyword id="KW-1185">Reference proteome</keyword>
<keyword id="KW-0804">Transcription</keyword>
<keyword id="KW-0805">Transcription regulation</keyword>